<sequence length="482" mass="52882">MSPTTAANQAKKLIKVPEMRRIKHIHFVGIGGAGMCGIAEVLANQGYKISGSDIKASKTTQQLEENGIKVYIGHEAENIKNANVLVVSTAIDPENPEVKAAIEQRIPIVRRAEMLGELMRYRHGIAVAGTHGKTTTTSLLTTMLAEENLDPTYVIGGLLNSTGVNAALGESRFIVAEADESDASFLYLQPMAAIVTNIDADHMDTYEGSFDKLKDTFVQFLHNLPFYGLAVVCGDDANIREILPRVGRPVITYGFNEDNDIRAIDVEQDGMRSHFTVLRKGREPLRLTINQPGLHNVLNALAAIGVATDEGVSDEAISRALKGFSGVGRRFQVQGEFELGEGNVKLVDDYGHHPKEVEATIKAARQSHPDRRLVMLFQPHRYSRTRDCFDDFIEVLSQVDQLLLLEVYPAGEKPIVGADSRTLARSIRLRGQVEPILIDPVEGNLQNIMQNVLQPNDLLLTQGAGNVGAISVELAQHHLYVK</sequence>
<reference key="1">
    <citation type="journal article" date="2008" name="PLoS ONE">
        <title>Comparative analysis of Acinetobacters: three genomes for three lifestyles.</title>
        <authorList>
            <person name="Vallenet D."/>
            <person name="Nordmann P."/>
            <person name="Barbe V."/>
            <person name="Poirel L."/>
            <person name="Mangenot S."/>
            <person name="Bataille E."/>
            <person name="Dossat C."/>
            <person name="Gas S."/>
            <person name="Kreimeyer A."/>
            <person name="Lenoble P."/>
            <person name="Oztas S."/>
            <person name="Poulain J."/>
            <person name="Segurens B."/>
            <person name="Robert C."/>
            <person name="Abergel C."/>
            <person name="Claverie J.-M."/>
            <person name="Raoult D."/>
            <person name="Medigue C."/>
            <person name="Weissenbach J."/>
            <person name="Cruveiller S."/>
        </authorList>
    </citation>
    <scope>NUCLEOTIDE SEQUENCE [LARGE SCALE GENOMIC DNA]</scope>
    <source>
        <strain>AYE</strain>
    </source>
</reference>
<dbReference type="EC" id="6.3.2.8" evidence="1"/>
<dbReference type="EMBL" id="CU459141">
    <property type="protein sequence ID" value="CAM85135.1"/>
    <property type="molecule type" value="Genomic_DNA"/>
</dbReference>
<dbReference type="RefSeq" id="WP_000075472.1">
    <property type="nucleotide sequence ID" value="NZ_JBDGFB010000004.1"/>
</dbReference>
<dbReference type="SMR" id="B0V9F6"/>
<dbReference type="EnsemblBacteria" id="CAM85135">
    <property type="protein sequence ID" value="CAM85135"/>
    <property type="gene ID" value="ABAYE0149"/>
</dbReference>
<dbReference type="KEGG" id="aby:ABAYE0149"/>
<dbReference type="HOGENOM" id="CLU_028104_2_2_6"/>
<dbReference type="UniPathway" id="UPA00219"/>
<dbReference type="GO" id="GO:0005737">
    <property type="term" value="C:cytoplasm"/>
    <property type="evidence" value="ECO:0007669"/>
    <property type="project" value="UniProtKB-SubCell"/>
</dbReference>
<dbReference type="GO" id="GO:0005524">
    <property type="term" value="F:ATP binding"/>
    <property type="evidence" value="ECO:0007669"/>
    <property type="project" value="UniProtKB-UniRule"/>
</dbReference>
<dbReference type="GO" id="GO:0008763">
    <property type="term" value="F:UDP-N-acetylmuramate-L-alanine ligase activity"/>
    <property type="evidence" value="ECO:0007669"/>
    <property type="project" value="UniProtKB-UniRule"/>
</dbReference>
<dbReference type="GO" id="GO:0051301">
    <property type="term" value="P:cell division"/>
    <property type="evidence" value="ECO:0007669"/>
    <property type="project" value="UniProtKB-KW"/>
</dbReference>
<dbReference type="GO" id="GO:0071555">
    <property type="term" value="P:cell wall organization"/>
    <property type="evidence" value="ECO:0007669"/>
    <property type="project" value="UniProtKB-KW"/>
</dbReference>
<dbReference type="GO" id="GO:0009252">
    <property type="term" value="P:peptidoglycan biosynthetic process"/>
    <property type="evidence" value="ECO:0007669"/>
    <property type="project" value="UniProtKB-UniRule"/>
</dbReference>
<dbReference type="GO" id="GO:0008360">
    <property type="term" value="P:regulation of cell shape"/>
    <property type="evidence" value="ECO:0007669"/>
    <property type="project" value="UniProtKB-KW"/>
</dbReference>
<dbReference type="FunFam" id="3.40.1190.10:FF:000001">
    <property type="entry name" value="UDP-N-acetylmuramate--L-alanine ligase"/>
    <property type="match status" value="1"/>
</dbReference>
<dbReference type="FunFam" id="3.40.50.720:FF:000046">
    <property type="entry name" value="UDP-N-acetylmuramate--L-alanine ligase"/>
    <property type="match status" value="1"/>
</dbReference>
<dbReference type="Gene3D" id="3.90.190.20">
    <property type="entry name" value="Mur ligase, C-terminal domain"/>
    <property type="match status" value="1"/>
</dbReference>
<dbReference type="Gene3D" id="3.40.1190.10">
    <property type="entry name" value="Mur-like, catalytic domain"/>
    <property type="match status" value="1"/>
</dbReference>
<dbReference type="Gene3D" id="3.40.50.720">
    <property type="entry name" value="NAD(P)-binding Rossmann-like Domain"/>
    <property type="match status" value="1"/>
</dbReference>
<dbReference type="HAMAP" id="MF_00046">
    <property type="entry name" value="MurC"/>
    <property type="match status" value="1"/>
</dbReference>
<dbReference type="InterPro" id="IPR036565">
    <property type="entry name" value="Mur-like_cat_sf"/>
</dbReference>
<dbReference type="InterPro" id="IPR004101">
    <property type="entry name" value="Mur_ligase_C"/>
</dbReference>
<dbReference type="InterPro" id="IPR036615">
    <property type="entry name" value="Mur_ligase_C_dom_sf"/>
</dbReference>
<dbReference type="InterPro" id="IPR013221">
    <property type="entry name" value="Mur_ligase_cen"/>
</dbReference>
<dbReference type="InterPro" id="IPR000713">
    <property type="entry name" value="Mur_ligase_N"/>
</dbReference>
<dbReference type="InterPro" id="IPR050061">
    <property type="entry name" value="MurCDEF_pg_biosynth"/>
</dbReference>
<dbReference type="InterPro" id="IPR005758">
    <property type="entry name" value="UDP-N-AcMur_Ala_ligase_MurC"/>
</dbReference>
<dbReference type="NCBIfam" id="TIGR01082">
    <property type="entry name" value="murC"/>
    <property type="match status" value="1"/>
</dbReference>
<dbReference type="PANTHER" id="PTHR43445:SF3">
    <property type="entry name" value="UDP-N-ACETYLMURAMATE--L-ALANINE LIGASE"/>
    <property type="match status" value="1"/>
</dbReference>
<dbReference type="PANTHER" id="PTHR43445">
    <property type="entry name" value="UDP-N-ACETYLMURAMATE--L-ALANINE LIGASE-RELATED"/>
    <property type="match status" value="1"/>
</dbReference>
<dbReference type="Pfam" id="PF01225">
    <property type="entry name" value="Mur_ligase"/>
    <property type="match status" value="1"/>
</dbReference>
<dbReference type="Pfam" id="PF02875">
    <property type="entry name" value="Mur_ligase_C"/>
    <property type="match status" value="1"/>
</dbReference>
<dbReference type="Pfam" id="PF08245">
    <property type="entry name" value="Mur_ligase_M"/>
    <property type="match status" value="1"/>
</dbReference>
<dbReference type="SUPFAM" id="SSF51984">
    <property type="entry name" value="MurCD N-terminal domain"/>
    <property type="match status" value="1"/>
</dbReference>
<dbReference type="SUPFAM" id="SSF53623">
    <property type="entry name" value="MurD-like peptide ligases, catalytic domain"/>
    <property type="match status" value="1"/>
</dbReference>
<dbReference type="SUPFAM" id="SSF53244">
    <property type="entry name" value="MurD-like peptide ligases, peptide-binding domain"/>
    <property type="match status" value="1"/>
</dbReference>
<name>MURC_ACIBY</name>
<evidence type="ECO:0000255" key="1">
    <source>
        <dbReference type="HAMAP-Rule" id="MF_00046"/>
    </source>
</evidence>
<feature type="chain" id="PRO_1000091071" description="UDP-N-acetylmuramate--L-alanine ligase">
    <location>
        <begin position="1"/>
        <end position="482"/>
    </location>
</feature>
<feature type="binding site" evidence="1">
    <location>
        <begin position="129"/>
        <end position="135"/>
    </location>
    <ligand>
        <name>ATP</name>
        <dbReference type="ChEBI" id="CHEBI:30616"/>
    </ligand>
</feature>
<accession>B0V9F6</accession>
<comment type="function">
    <text evidence="1">Cell wall formation.</text>
</comment>
<comment type="catalytic activity">
    <reaction evidence="1">
        <text>UDP-N-acetyl-alpha-D-muramate + L-alanine + ATP = UDP-N-acetyl-alpha-D-muramoyl-L-alanine + ADP + phosphate + H(+)</text>
        <dbReference type="Rhea" id="RHEA:23372"/>
        <dbReference type="ChEBI" id="CHEBI:15378"/>
        <dbReference type="ChEBI" id="CHEBI:30616"/>
        <dbReference type="ChEBI" id="CHEBI:43474"/>
        <dbReference type="ChEBI" id="CHEBI:57972"/>
        <dbReference type="ChEBI" id="CHEBI:70757"/>
        <dbReference type="ChEBI" id="CHEBI:83898"/>
        <dbReference type="ChEBI" id="CHEBI:456216"/>
        <dbReference type="EC" id="6.3.2.8"/>
    </reaction>
</comment>
<comment type="pathway">
    <text evidence="1">Cell wall biogenesis; peptidoglycan biosynthesis.</text>
</comment>
<comment type="subcellular location">
    <subcellularLocation>
        <location evidence="1">Cytoplasm</location>
    </subcellularLocation>
</comment>
<comment type="similarity">
    <text evidence="1">Belongs to the MurCDEF family.</text>
</comment>
<protein>
    <recommendedName>
        <fullName evidence="1">UDP-N-acetylmuramate--L-alanine ligase</fullName>
        <ecNumber evidence="1">6.3.2.8</ecNumber>
    </recommendedName>
    <alternativeName>
        <fullName evidence="1">UDP-N-acetylmuramoyl-L-alanine synthetase</fullName>
    </alternativeName>
</protein>
<organism>
    <name type="scientific">Acinetobacter baumannii (strain AYE)</name>
    <dbReference type="NCBI Taxonomy" id="509173"/>
    <lineage>
        <taxon>Bacteria</taxon>
        <taxon>Pseudomonadati</taxon>
        <taxon>Pseudomonadota</taxon>
        <taxon>Gammaproteobacteria</taxon>
        <taxon>Moraxellales</taxon>
        <taxon>Moraxellaceae</taxon>
        <taxon>Acinetobacter</taxon>
        <taxon>Acinetobacter calcoaceticus/baumannii complex</taxon>
    </lineage>
</organism>
<proteinExistence type="inferred from homology"/>
<keyword id="KW-0067">ATP-binding</keyword>
<keyword id="KW-0131">Cell cycle</keyword>
<keyword id="KW-0132">Cell division</keyword>
<keyword id="KW-0133">Cell shape</keyword>
<keyword id="KW-0961">Cell wall biogenesis/degradation</keyword>
<keyword id="KW-0963">Cytoplasm</keyword>
<keyword id="KW-0436">Ligase</keyword>
<keyword id="KW-0547">Nucleotide-binding</keyword>
<keyword id="KW-0573">Peptidoglycan synthesis</keyword>
<gene>
    <name evidence="1" type="primary">murC</name>
    <name type="ordered locus">ABAYE0149</name>
</gene>